<proteinExistence type="inferred from homology"/>
<feature type="chain" id="PRO_1000073162" description="GTP 3',8-cyclase">
    <location>
        <begin position="1"/>
        <end position="336"/>
    </location>
</feature>
<feature type="domain" description="Radical SAM core" evidence="2">
    <location>
        <begin position="16"/>
        <end position="241"/>
    </location>
</feature>
<feature type="binding site" evidence="1">
    <location>
        <position position="25"/>
    </location>
    <ligand>
        <name>GTP</name>
        <dbReference type="ChEBI" id="CHEBI:37565"/>
    </ligand>
</feature>
<feature type="binding site" evidence="1">
    <location>
        <position position="32"/>
    </location>
    <ligand>
        <name>[4Fe-4S] cluster</name>
        <dbReference type="ChEBI" id="CHEBI:49883"/>
        <label>1</label>
        <note>4Fe-4S-S-AdoMet</note>
    </ligand>
</feature>
<feature type="binding site" evidence="1">
    <location>
        <position position="36"/>
    </location>
    <ligand>
        <name>[4Fe-4S] cluster</name>
        <dbReference type="ChEBI" id="CHEBI:49883"/>
        <label>1</label>
        <note>4Fe-4S-S-AdoMet</note>
    </ligand>
</feature>
<feature type="binding site" evidence="1">
    <location>
        <position position="38"/>
    </location>
    <ligand>
        <name>S-adenosyl-L-methionine</name>
        <dbReference type="ChEBI" id="CHEBI:59789"/>
    </ligand>
</feature>
<feature type="binding site" evidence="1">
    <location>
        <position position="39"/>
    </location>
    <ligand>
        <name>[4Fe-4S] cluster</name>
        <dbReference type="ChEBI" id="CHEBI:49883"/>
        <label>1</label>
        <note>4Fe-4S-S-AdoMet</note>
    </ligand>
</feature>
<feature type="binding site" evidence="1">
    <location>
        <position position="75"/>
    </location>
    <ligand>
        <name>GTP</name>
        <dbReference type="ChEBI" id="CHEBI:37565"/>
    </ligand>
</feature>
<feature type="binding site" evidence="1">
    <location>
        <position position="79"/>
    </location>
    <ligand>
        <name>S-adenosyl-L-methionine</name>
        <dbReference type="ChEBI" id="CHEBI:59789"/>
    </ligand>
</feature>
<feature type="binding site" evidence="1">
    <location>
        <position position="106"/>
    </location>
    <ligand>
        <name>GTP</name>
        <dbReference type="ChEBI" id="CHEBI:37565"/>
    </ligand>
</feature>
<feature type="binding site" evidence="1">
    <location>
        <position position="130"/>
    </location>
    <ligand>
        <name>S-adenosyl-L-methionine</name>
        <dbReference type="ChEBI" id="CHEBI:59789"/>
    </ligand>
</feature>
<feature type="binding site" evidence="1">
    <location>
        <position position="167"/>
    </location>
    <ligand>
        <name>GTP</name>
        <dbReference type="ChEBI" id="CHEBI:37565"/>
    </ligand>
</feature>
<feature type="binding site" evidence="1">
    <location>
        <position position="201"/>
    </location>
    <ligand>
        <name>S-adenosyl-L-methionine</name>
        <dbReference type="ChEBI" id="CHEBI:59789"/>
    </ligand>
</feature>
<feature type="binding site" evidence="1">
    <location>
        <position position="264"/>
    </location>
    <ligand>
        <name>[4Fe-4S] cluster</name>
        <dbReference type="ChEBI" id="CHEBI:49883"/>
        <label>2</label>
        <note>4Fe-4S-substrate</note>
    </ligand>
</feature>
<feature type="binding site" evidence="1">
    <location>
        <position position="267"/>
    </location>
    <ligand>
        <name>[4Fe-4S] cluster</name>
        <dbReference type="ChEBI" id="CHEBI:49883"/>
        <label>2</label>
        <note>4Fe-4S-substrate</note>
    </ligand>
</feature>
<feature type="binding site" evidence="1">
    <location>
        <begin position="269"/>
        <end position="271"/>
    </location>
    <ligand>
        <name>GTP</name>
        <dbReference type="ChEBI" id="CHEBI:37565"/>
    </ligand>
</feature>
<feature type="binding site" evidence="1">
    <location>
        <position position="281"/>
    </location>
    <ligand>
        <name>[4Fe-4S] cluster</name>
        <dbReference type="ChEBI" id="CHEBI:49883"/>
        <label>2</label>
        <note>4Fe-4S-substrate</note>
    </ligand>
</feature>
<comment type="function">
    <text evidence="1">Catalyzes the cyclization of GTP to (8S)-3',8-cyclo-7,8-dihydroguanosine 5'-triphosphate.</text>
</comment>
<comment type="catalytic activity">
    <reaction evidence="1">
        <text>GTP + AH2 + S-adenosyl-L-methionine = (8S)-3',8-cyclo-7,8-dihydroguanosine 5'-triphosphate + 5'-deoxyadenosine + L-methionine + A + H(+)</text>
        <dbReference type="Rhea" id="RHEA:49576"/>
        <dbReference type="ChEBI" id="CHEBI:13193"/>
        <dbReference type="ChEBI" id="CHEBI:15378"/>
        <dbReference type="ChEBI" id="CHEBI:17319"/>
        <dbReference type="ChEBI" id="CHEBI:17499"/>
        <dbReference type="ChEBI" id="CHEBI:37565"/>
        <dbReference type="ChEBI" id="CHEBI:57844"/>
        <dbReference type="ChEBI" id="CHEBI:59789"/>
        <dbReference type="ChEBI" id="CHEBI:131766"/>
        <dbReference type="EC" id="4.1.99.22"/>
    </reaction>
</comment>
<comment type="cofactor">
    <cofactor evidence="1">
        <name>[4Fe-4S] cluster</name>
        <dbReference type="ChEBI" id="CHEBI:49883"/>
    </cofactor>
    <text evidence="1">Binds 2 [4Fe-4S] clusters. Binds 1 [4Fe-4S] cluster coordinated with 3 cysteines and an exchangeable S-adenosyl-L-methionine and 1 [4Fe-4S] cluster coordinated with 3 cysteines and the GTP-derived substrate.</text>
</comment>
<comment type="pathway">
    <text evidence="1">Cofactor biosynthesis; molybdopterin biosynthesis.</text>
</comment>
<comment type="subunit">
    <text evidence="1">Monomer and homodimer.</text>
</comment>
<comment type="similarity">
    <text evidence="1">Belongs to the radical SAM superfamily. MoaA family.</text>
</comment>
<dbReference type="EC" id="4.1.99.22" evidence="1"/>
<dbReference type="EMBL" id="CP000746">
    <property type="protein sequence ID" value="ABR75029.1"/>
    <property type="molecule type" value="Genomic_DNA"/>
</dbReference>
<dbReference type="RefSeq" id="WP_012073406.1">
    <property type="nucleotide sequence ID" value="NC_009655.1"/>
</dbReference>
<dbReference type="SMR" id="A6VPY2"/>
<dbReference type="STRING" id="339671.Asuc_1677"/>
<dbReference type="KEGG" id="asu:Asuc_1677"/>
<dbReference type="eggNOG" id="COG2896">
    <property type="taxonomic scope" value="Bacteria"/>
</dbReference>
<dbReference type="HOGENOM" id="CLU_009273_0_1_6"/>
<dbReference type="OrthoDB" id="9763993at2"/>
<dbReference type="UniPathway" id="UPA00344"/>
<dbReference type="Proteomes" id="UP000001114">
    <property type="component" value="Chromosome"/>
</dbReference>
<dbReference type="GO" id="GO:0051539">
    <property type="term" value="F:4 iron, 4 sulfur cluster binding"/>
    <property type="evidence" value="ECO:0007669"/>
    <property type="project" value="UniProtKB-UniRule"/>
</dbReference>
<dbReference type="GO" id="GO:0061799">
    <property type="term" value="F:cyclic pyranopterin monophosphate synthase activity"/>
    <property type="evidence" value="ECO:0007669"/>
    <property type="project" value="TreeGrafter"/>
</dbReference>
<dbReference type="GO" id="GO:0061798">
    <property type="term" value="F:GTP 3',8'-cyclase activity"/>
    <property type="evidence" value="ECO:0007669"/>
    <property type="project" value="UniProtKB-UniRule"/>
</dbReference>
<dbReference type="GO" id="GO:0005525">
    <property type="term" value="F:GTP binding"/>
    <property type="evidence" value="ECO:0007669"/>
    <property type="project" value="UniProtKB-UniRule"/>
</dbReference>
<dbReference type="GO" id="GO:0046872">
    <property type="term" value="F:metal ion binding"/>
    <property type="evidence" value="ECO:0007669"/>
    <property type="project" value="UniProtKB-KW"/>
</dbReference>
<dbReference type="GO" id="GO:1904047">
    <property type="term" value="F:S-adenosyl-L-methionine binding"/>
    <property type="evidence" value="ECO:0007669"/>
    <property type="project" value="UniProtKB-UniRule"/>
</dbReference>
<dbReference type="GO" id="GO:0006777">
    <property type="term" value="P:Mo-molybdopterin cofactor biosynthetic process"/>
    <property type="evidence" value="ECO:0007669"/>
    <property type="project" value="UniProtKB-UniRule"/>
</dbReference>
<dbReference type="CDD" id="cd01335">
    <property type="entry name" value="Radical_SAM"/>
    <property type="match status" value="1"/>
</dbReference>
<dbReference type="CDD" id="cd21117">
    <property type="entry name" value="Twitch_MoaA"/>
    <property type="match status" value="1"/>
</dbReference>
<dbReference type="FunFam" id="3.20.20.70:FF:000057">
    <property type="entry name" value="GTP 3',8-cyclase"/>
    <property type="match status" value="1"/>
</dbReference>
<dbReference type="Gene3D" id="3.20.20.70">
    <property type="entry name" value="Aldolase class I"/>
    <property type="match status" value="1"/>
</dbReference>
<dbReference type="HAMAP" id="MF_01225_B">
    <property type="entry name" value="MoaA_B"/>
    <property type="match status" value="1"/>
</dbReference>
<dbReference type="InterPro" id="IPR013785">
    <property type="entry name" value="Aldolase_TIM"/>
</dbReference>
<dbReference type="InterPro" id="IPR006638">
    <property type="entry name" value="Elp3/MiaA/NifB-like_rSAM"/>
</dbReference>
<dbReference type="InterPro" id="IPR013483">
    <property type="entry name" value="MoaA"/>
</dbReference>
<dbReference type="InterPro" id="IPR000385">
    <property type="entry name" value="MoaA_NifB_PqqE_Fe-S-bd_CS"/>
</dbReference>
<dbReference type="InterPro" id="IPR010505">
    <property type="entry name" value="MoaA_twitch"/>
</dbReference>
<dbReference type="InterPro" id="IPR050105">
    <property type="entry name" value="MoCo_biosynth_MoaA/MoaC"/>
</dbReference>
<dbReference type="InterPro" id="IPR007197">
    <property type="entry name" value="rSAM"/>
</dbReference>
<dbReference type="NCBIfam" id="TIGR02666">
    <property type="entry name" value="moaA"/>
    <property type="match status" value="1"/>
</dbReference>
<dbReference type="PANTHER" id="PTHR22960:SF28">
    <property type="entry name" value="GTP 3',8-CYCLASE"/>
    <property type="match status" value="1"/>
</dbReference>
<dbReference type="PANTHER" id="PTHR22960">
    <property type="entry name" value="MOLYBDOPTERIN COFACTOR SYNTHESIS PROTEIN A"/>
    <property type="match status" value="1"/>
</dbReference>
<dbReference type="Pfam" id="PF13353">
    <property type="entry name" value="Fer4_12"/>
    <property type="match status" value="1"/>
</dbReference>
<dbReference type="Pfam" id="PF06463">
    <property type="entry name" value="Mob_synth_C"/>
    <property type="match status" value="1"/>
</dbReference>
<dbReference type="Pfam" id="PF04055">
    <property type="entry name" value="Radical_SAM"/>
    <property type="match status" value="1"/>
</dbReference>
<dbReference type="SFLD" id="SFLDG01383">
    <property type="entry name" value="cyclic_pyranopterin_phosphate"/>
    <property type="match status" value="1"/>
</dbReference>
<dbReference type="SFLD" id="SFLDG01386">
    <property type="entry name" value="main_SPASM_domain-containing"/>
    <property type="match status" value="1"/>
</dbReference>
<dbReference type="SMART" id="SM00729">
    <property type="entry name" value="Elp3"/>
    <property type="match status" value="1"/>
</dbReference>
<dbReference type="SUPFAM" id="SSF102114">
    <property type="entry name" value="Radical SAM enzymes"/>
    <property type="match status" value="1"/>
</dbReference>
<dbReference type="PROSITE" id="PS01305">
    <property type="entry name" value="MOAA_NIFB_PQQE"/>
    <property type="match status" value="1"/>
</dbReference>
<dbReference type="PROSITE" id="PS51918">
    <property type="entry name" value="RADICAL_SAM"/>
    <property type="match status" value="1"/>
</dbReference>
<keyword id="KW-0004">4Fe-4S</keyword>
<keyword id="KW-0342">GTP-binding</keyword>
<keyword id="KW-0408">Iron</keyword>
<keyword id="KW-0411">Iron-sulfur</keyword>
<keyword id="KW-0456">Lyase</keyword>
<keyword id="KW-0479">Metal-binding</keyword>
<keyword id="KW-0501">Molybdenum cofactor biosynthesis</keyword>
<keyword id="KW-0547">Nucleotide-binding</keyword>
<keyword id="KW-1185">Reference proteome</keyword>
<keyword id="KW-0949">S-adenosyl-L-methionine</keyword>
<gene>
    <name evidence="1" type="primary">moaA</name>
    <name type="ordered locus">Asuc_1677</name>
</gene>
<reference key="1">
    <citation type="journal article" date="2010" name="BMC Genomics">
        <title>A genomic perspective on the potential of Actinobacillus succinogenes for industrial succinate production.</title>
        <authorList>
            <person name="McKinlay J.B."/>
            <person name="Laivenieks M."/>
            <person name="Schindler B.D."/>
            <person name="McKinlay A.A."/>
            <person name="Siddaramappa S."/>
            <person name="Challacombe J.F."/>
            <person name="Lowry S.R."/>
            <person name="Clum A."/>
            <person name="Lapidus A.L."/>
            <person name="Burkhart K.B."/>
            <person name="Harkins V."/>
            <person name="Vieille C."/>
        </authorList>
    </citation>
    <scope>NUCLEOTIDE SEQUENCE [LARGE SCALE GENOMIC DNA]</scope>
    <source>
        <strain>ATCC 55618 / DSM 22257 / CCUG 43843 / 130Z</strain>
    </source>
</reference>
<accession>A6VPY2</accession>
<sequence>MQSIPVKNAGDRLVDAYRRTYYYLRLSITDVCNFRCNYCLPDGYHPSHERDKFLTVDEIRRAVSAFAAMGAQKVRITGGEPTLRKDFLQITENITALDGIRHVALTTNGYRMAQDVGAWKQAGISSINVSVDSLDPRMFYQITGENKFTEVMRGIDRAFEAGYRKIKVNSVLMKDLNEREFDKFLAWVKDRPIQMRFIELMQTGEMDAFFRCHHLSGQVLAEKLIRDGWQLQSKGITDGPAKVFRHPDYVGEIGLIMPYEPDFCASCNRLRVSAKGKLHLCLFGEEGIDLRDLLQRDDQQSLLQARLFAALQGKREHHFLHRGDSGIRKNLSTIGG</sequence>
<organism>
    <name type="scientific">Actinobacillus succinogenes (strain ATCC 55618 / DSM 22257 / CCUG 43843 / 130Z)</name>
    <dbReference type="NCBI Taxonomy" id="339671"/>
    <lineage>
        <taxon>Bacteria</taxon>
        <taxon>Pseudomonadati</taxon>
        <taxon>Pseudomonadota</taxon>
        <taxon>Gammaproteobacteria</taxon>
        <taxon>Pasteurellales</taxon>
        <taxon>Pasteurellaceae</taxon>
        <taxon>Actinobacillus</taxon>
    </lineage>
</organism>
<name>MOAA_ACTSZ</name>
<evidence type="ECO:0000255" key="1">
    <source>
        <dbReference type="HAMAP-Rule" id="MF_01225"/>
    </source>
</evidence>
<evidence type="ECO:0000255" key="2">
    <source>
        <dbReference type="PROSITE-ProRule" id="PRU01266"/>
    </source>
</evidence>
<protein>
    <recommendedName>
        <fullName evidence="1">GTP 3',8-cyclase</fullName>
        <ecNumber evidence="1">4.1.99.22</ecNumber>
    </recommendedName>
    <alternativeName>
        <fullName evidence="1">Molybdenum cofactor biosynthesis protein A</fullName>
    </alternativeName>
</protein>